<keyword id="KW-0963">Cytoplasm</keyword>
<keyword id="KW-0489">Methyltransferase</keyword>
<keyword id="KW-0949">S-adenosyl-L-methionine</keyword>
<keyword id="KW-0808">Transferase</keyword>
<evidence type="ECO:0000255" key="1">
    <source>
        <dbReference type="HAMAP-Rule" id="MF_00812"/>
    </source>
</evidence>
<reference key="1">
    <citation type="journal article" date="2007" name="PLoS ONE">
        <title>Genome sequencing shows that European isolates of Francisella tularensis subspecies tularensis are almost identical to US laboratory strain Schu S4.</title>
        <authorList>
            <person name="Chaudhuri R.R."/>
            <person name="Ren C.-P."/>
            <person name="Desmond L."/>
            <person name="Vincent G.A."/>
            <person name="Silman N.J."/>
            <person name="Brehm J.K."/>
            <person name="Elmore M.J."/>
            <person name="Hudson M.J."/>
            <person name="Forsman M."/>
            <person name="Isherwood K.E."/>
            <person name="Gurycova D."/>
            <person name="Minton N.P."/>
            <person name="Titball R.W."/>
            <person name="Pallen M.J."/>
            <person name="Vipond R."/>
        </authorList>
    </citation>
    <scope>NUCLEOTIDE SEQUENCE [LARGE SCALE GENOMIC DNA]</scope>
    <source>
        <strain>FSC 198</strain>
    </source>
</reference>
<protein>
    <recommendedName>
        <fullName evidence="1">Thiopurine S-methyltransferase</fullName>
        <ecNumber evidence="1">2.1.1.67</ecNumber>
    </recommendedName>
    <alternativeName>
        <fullName evidence="1">Thiopurine methyltransferase</fullName>
    </alternativeName>
</protein>
<name>TPMT_FRAT1</name>
<sequence length="226" mass="26386">MNKLETNNNQYWLDRWQNDDVGFCQESPNEFLVKHFSKLNINDSSVCLIPMCGCSIDMLFFLSKGVKVIGIELSEKAVLSFFSQNTINYEVIHGNDYKLYKGDDIEIYVADIFNLPKIANNLPVFDIWYDRGAYIALPNDLRTNYAKMMLEVCSNNTQILLLVMEHDKKSQTPPYSVTQAELIKNFSAKIKFELIDSKQRDNIPDYRKAEGMTEQYYTTYLRKKQY</sequence>
<comment type="catalytic activity">
    <reaction evidence="1">
        <text>S-adenosyl-L-methionine + a thiopurine = S-adenosyl-L-homocysteine + a thiopurine S-methylether.</text>
        <dbReference type="EC" id="2.1.1.67"/>
    </reaction>
</comment>
<comment type="subcellular location">
    <subcellularLocation>
        <location evidence="1">Cytoplasm</location>
    </subcellularLocation>
</comment>
<comment type="similarity">
    <text evidence="1">Belongs to the class I-like SAM-binding methyltransferase superfamily. TPMT family.</text>
</comment>
<proteinExistence type="inferred from homology"/>
<dbReference type="EC" id="2.1.1.67" evidence="1"/>
<dbReference type="EMBL" id="AM286280">
    <property type="protein sequence ID" value="CAL09677.1"/>
    <property type="molecule type" value="Genomic_DNA"/>
</dbReference>
<dbReference type="RefSeq" id="WP_003022610.1">
    <property type="nucleotide sequence ID" value="NC_008245.1"/>
</dbReference>
<dbReference type="SMR" id="Q14FX6"/>
<dbReference type="KEGG" id="ftf:FTF1661"/>
<dbReference type="HOGENOM" id="CLU_085515_1_0_6"/>
<dbReference type="GO" id="GO:0005737">
    <property type="term" value="C:cytoplasm"/>
    <property type="evidence" value="ECO:0007669"/>
    <property type="project" value="UniProtKB-SubCell"/>
</dbReference>
<dbReference type="GO" id="GO:0008119">
    <property type="term" value="F:thiopurine S-methyltransferase activity"/>
    <property type="evidence" value="ECO:0007669"/>
    <property type="project" value="UniProtKB-UniRule"/>
</dbReference>
<dbReference type="GO" id="GO:0032259">
    <property type="term" value="P:methylation"/>
    <property type="evidence" value="ECO:0007669"/>
    <property type="project" value="UniProtKB-KW"/>
</dbReference>
<dbReference type="FunFam" id="3.40.50.150:FF:000101">
    <property type="entry name" value="Thiopurine S-methyltransferase"/>
    <property type="match status" value="1"/>
</dbReference>
<dbReference type="Gene3D" id="3.40.50.150">
    <property type="entry name" value="Vaccinia Virus protein VP39"/>
    <property type="match status" value="1"/>
</dbReference>
<dbReference type="HAMAP" id="MF_00812">
    <property type="entry name" value="Thiopur_methtran"/>
    <property type="match status" value="1"/>
</dbReference>
<dbReference type="InterPro" id="IPR029063">
    <property type="entry name" value="SAM-dependent_MTases_sf"/>
</dbReference>
<dbReference type="InterPro" id="IPR025835">
    <property type="entry name" value="Thiopurine_S-MeTrfase"/>
</dbReference>
<dbReference type="InterPro" id="IPR008854">
    <property type="entry name" value="TPMT"/>
</dbReference>
<dbReference type="NCBIfam" id="NF009733">
    <property type="entry name" value="PRK13256.1"/>
    <property type="match status" value="1"/>
</dbReference>
<dbReference type="PANTHER" id="PTHR10259">
    <property type="entry name" value="THIOPURINE S-METHYLTRANSFERASE"/>
    <property type="match status" value="1"/>
</dbReference>
<dbReference type="PANTHER" id="PTHR10259:SF11">
    <property type="entry name" value="THIOPURINE S-METHYLTRANSFERASE"/>
    <property type="match status" value="1"/>
</dbReference>
<dbReference type="Pfam" id="PF05724">
    <property type="entry name" value="TPMT"/>
    <property type="match status" value="1"/>
</dbReference>
<dbReference type="PIRSF" id="PIRSF023956">
    <property type="entry name" value="Thiopurine_S-methyltransferase"/>
    <property type="match status" value="1"/>
</dbReference>
<dbReference type="SUPFAM" id="SSF53335">
    <property type="entry name" value="S-adenosyl-L-methionine-dependent methyltransferases"/>
    <property type="match status" value="1"/>
</dbReference>
<dbReference type="PROSITE" id="PS51585">
    <property type="entry name" value="SAM_MT_TPMT"/>
    <property type="match status" value="1"/>
</dbReference>
<accession>Q14FX6</accession>
<feature type="chain" id="PRO_1000047203" description="Thiopurine S-methyltransferase">
    <location>
        <begin position="1"/>
        <end position="226"/>
    </location>
</feature>
<feature type="binding site" evidence="1">
    <location>
        <position position="16"/>
    </location>
    <ligand>
        <name>S-adenosyl-L-methionine</name>
        <dbReference type="ChEBI" id="CHEBI:59789"/>
    </ligand>
</feature>
<feature type="binding site" evidence="1">
    <location>
        <position position="51"/>
    </location>
    <ligand>
        <name>S-adenosyl-L-methionine</name>
        <dbReference type="ChEBI" id="CHEBI:59789"/>
    </ligand>
</feature>
<feature type="binding site" evidence="1">
    <location>
        <position position="72"/>
    </location>
    <ligand>
        <name>S-adenosyl-L-methionine</name>
        <dbReference type="ChEBI" id="CHEBI:59789"/>
    </ligand>
</feature>
<feature type="binding site" evidence="1">
    <location>
        <position position="131"/>
    </location>
    <ligand>
        <name>S-adenosyl-L-methionine</name>
        <dbReference type="ChEBI" id="CHEBI:59789"/>
    </ligand>
</feature>
<gene>
    <name evidence="1" type="primary">tpm</name>
    <name type="ordered locus">FTF1661</name>
</gene>
<organism>
    <name type="scientific">Francisella tularensis subsp. tularensis (strain FSC 198)</name>
    <dbReference type="NCBI Taxonomy" id="393115"/>
    <lineage>
        <taxon>Bacteria</taxon>
        <taxon>Pseudomonadati</taxon>
        <taxon>Pseudomonadota</taxon>
        <taxon>Gammaproteobacteria</taxon>
        <taxon>Thiotrichales</taxon>
        <taxon>Francisellaceae</taxon>
        <taxon>Francisella</taxon>
    </lineage>
</organism>